<protein>
    <recommendedName>
        <fullName evidence="1">Orotate phosphoribosyltransferase</fullName>
        <shortName evidence="1">OPRT</shortName>
        <shortName evidence="1">OPRTase</shortName>
        <ecNumber evidence="1">2.4.2.10</ecNumber>
    </recommendedName>
</protein>
<proteinExistence type="evidence at protein level"/>
<keyword id="KW-0328">Glycosyltransferase</keyword>
<keyword id="KW-0460">Magnesium</keyword>
<keyword id="KW-0665">Pyrimidine biosynthesis</keyword>
<keyword id="KW-0808">Transferase</keyword>
<sequence>MDVLELYRRTGALLEGHFLLRSGMHSPFFLQSAALLQHPLYAEAVGEALGKLFEDEKVDFVIAPAIGGVVLSFVVAKALGARALFAEKDGRGGMLIRKGLTVNPGDRFLAVEDVVTTGESVRKAIRAAEARGGVLVGVGAIVDRSGGRAAFGVPFRALLALEVPQYPEEACPLCREGVPLEEV</sequence>
<feature type="chain" id="PRO_0000110760" description="Orotate phosphoribosyltransferase">
    <location>
        <begin position="1"/>
        <end position="183"/>
    </location>
</feature>
<feature type="binding site" evidence="1">
    <location>
        <position position="21"/>
    </location>
    <ligand>
        <name>5-phospho-alpha-D-ribose 1-diphosphate</name>
        <dbReference type="ChEBI" id="CHEBI:58017"/>
    </ligand>
</feature>
<feature type="binding site" evidence="1">
    <location>
        <position position="88"/>
    </location>
    <ligand>
        <name>5-phospho-alpha-D-ribose 1-diphosphate</name>
        <dbReference type="ChEBI" id="CHEBI:58017"/>
    </ligand>
</feature>
<feature type="binding site" evidence="1">
    <location>
        <begin position="112"/>
        <end position="120"/>
    </location>
    <ligand>
        <name>5-phospho-alpha-D-ribose 1-diphosphate</name>
        <dbReference type="ChEBI" id="CHEBI:58017"/>
    </ligand>
</feature>
<feature type="binding site" evidence="1">
    <location>
        <position position="116"/>
    </location>
    <ligand>
        <name>orotate</name>
        <dbReference type="ChEBI" id="CHEBI:30839"/>
    </ligand>
</feature>
<feature type="binding site" evidence="1">
    <location>
        <position position="144"/>
    </location>
    <ligand>
        <name>orotate</name>
        <dbReference type="ChEBI" id="CHEBI:30839"/>
    </ligand>
</feature>
<reference key="1">
    <citation type="journal article" date="1996" name="Appl. Environ. Microbiol.">
        <title>Pyrimidine biosynthesis genes (pyrE and pyrF) of an extreme thermophile, Thermus thermophilus.</title>
        <authorList>
            <person name="Yamagishi A."/>
            <person name="Tanimoto T."/>
            <person name="Suzuki T."/>
            <person name="Oshima T."/>
        </authorList>
    </citation>
    <scope>NUCLEOTIDE SEQUENCE [GENOMIC DNA]</scope>
    <scope>FUNCTION</scope>
    <scope>CATALYTIC ACTIVITY</scope>
</reference>
<reference key="2">
    <citation type="journal article" date="2004" name="Nat. Biotechnol.">
        <title>The genome sequence of the extreme thermophile Thermus thermophilus.</title>
        <authorList>
            <person name="Henne A."/>
            <person name="Brueggemann H."/>
            <person name="Raasch C."/>
            <person name="Wiezer A."/>
            <person name="Hartsch T."/>
            <person name="Liesegang H."/>
            <person name="Johann A."/>
            <person name="Lienard T."/>
            <person name="Gohl O."/>
            <person name="Martinez-Arias R."/>
            <person name="Jacobi C."/>
            <person name="Starkuviene V."/>
            <person name="Schlenczeck S."/>
            <person name="Dencker S."/>
            <person name="Huber R."/>
            <person name="Klenk H.-P."/>
            <person name="Kramer W."/>
            <person name="Merkl R."/>
            <person name="Gottschalk G."/>
            <person name="Fritz H.-J."/>
        </authorList>
    </citation>
    <scope>NUCLEOTIDE SEQUENCE [LARGE SCALE GENOMIC DNA]</scope>
    <source>
        <strain>ATCC BAA-163 / DSM 7039 / HB27</strain>
    </source>
</reference>
<dbReference type="EC" id="2.4.2.10" evidence="1"/>
<dbReference type="EMBL" id="D83330">
    <property type="protein sequence ID" value="BAA11886.1"/>
    <property type="molecule type" value="Genomic_DNA"/>
</dbReference>
<dbReference type="EMBL" id="AE017221">
    <property type="protein sequence ID" value="AAS81722.1"/>
    <property type="molecule type" value="Genomic_DNA"/>
</dbReference>
<dbReference type="RefSeq" id="WP_011173763.1">
    <property type="nucleotide sequence ID" value="NC_005835.1"/>
</dbReference>
<dbReference type="SMR" id="P61498"/>
<dbReference type="KEGG" id="tth:TT_C1380"/>
<dbReference type="eggNOG" id="COG0461">
    <property type="taxonomic scope" value="Bacteria"/>
</dbReference>
<dbReference type="HOGENOM" id="CLU_074878_3_0_0"/>
<dbReference type="OrthoDB" id="9802134at2"/>
<dbReference type="UniPathway" id="UPA00070">
    <property type="reaction ID" value="UER00119"/>
</dbReference>
<dbReference type="Proteomes" id="UP000000592">
    <property type="component" value="Chromosome"/>
</dbReference>
<dbReference type="GO" id="GO:0000287">
    <property type="term" value="F:magnesium ion binding"/>
    <property type="evidence" value="ECO:0007669"/>
    <property type="project" value="UniProtKB-UniRule"/>
</dbReference>
<dbReference type="GO" id="GO:0004588">
    <property type="term" value="F:orotate phosphoribosyltransferase activity"/>
    <property type="evidence" value="ECO:0007669"/>
    <property type="project" value="UniProtKB-UniRule"/>
</dbReference>
<dbReference type="GO" id="GO:0044205">
    <property type="term" value="P:'de novo' UMP biosynthetic process"/>
    <property type="evidence" value="ECO:0007669"/>
    <property type="project" value="UniProtKB-UniRule"/>
</dbReference>
<dbReference type="GO" id="GO:0019856">
    <property type="term" value="P:pyrimidine nucleobase biosynthetic process"/>
    <property type="evidence" value="ECO:0007669"/>
    <property type="project" value="InterPro"/>
</dbReference>
<dbReference type="CDD" id="cd06223">
    <property type="entry name" value="PRTases_typeI"/>
    <property type="match status" value="1"/>
</dbReference>
<dbReference type="Gene3D" id="3.40.50.2020">
    <property type="match status" value="1"/>
</dbReference>
<dbReference type="HAMAP" id="MF_01208">
    <property type="entry name" value="PyrE"/>
    <property type="match status" value="1"/>
</dbReference>
<dbReference type="InterPro" id="IPR023031">
    <property type="entry name" value="OPRT"/>
</dbReference>
<dbReference type="InterPro" id="IPR006273">
    <property type="entry name" value="Orotate_PRibTrfase_bac"/>
</dbReference>
<dbReference type="InterPro" id="IPR000836">
    <property type="entry name" value="PRibTrfase_dom"/>
</dbReference>
<dbReference type="InterPro" id="IPR029057">
    <property type="entry name" value="PRTase-like"/>
</dbReference>
<dbReference type="NCBIfam" id="TIGR01367">
    <property type="entry name" value="pyrE_Therm"/>
    <property type="match status" value="1"/>
</dbReference>
<dbReference type="PANTHER" id="PTHR19278">
    <property type="entry name" value="OROTATE PHOSPHORIBOSYLTRANSFERASE"/>
    <property type="match status" value="1"/>
</dbReference>
<dbReference type="PANTHER" id="PTHR19278:SF9">
    <property type="entry name" value="URIDINE 5'-MONOPHOSPHATE SYNTHASE"/>
    <property type="match status" value="1"/>
</dbReference>
<dbReference type="Pfam" id="PF00156">
    <property type="entry name" value="Pribosyltran"/>
    <property type="match status" value="1"/>
</dbReference>
<dbReference type="SUPFAM" id="SSF53271">
    <property type="entry name" value="PRTase-like"/>
    <property type="match status" value="1"/>
</dbReference>
<dbReference type="PROSITE" id="PS00103">
    <property type="entry name" value="PUR_PYR_PR_TRANSFER"/>
    <property type="match status" value="1"/>
</dbReference>
<comment type="function">
    <text evidence="1 2">Catalyzes the transfer of a ribosyl phosphate group from 5-phosphoribose 1-diphosphate to orotate, leading to the formation of orotidine monophosphate (OMP).</text>
</comment>
<comment type="catalytic activity">
    <reaction evidence="1 2">
        <text>orotidine 5'-phosphate + diphosphate = orotate + 5-phospho-alpha-D-ribose 1-diphosphate</text>
        <dbReference type="Rhea" id="RHEA:10380"/>
        <dbReference type="ChEBI" id="CHEBI:30839"/>
        <dbReference type="ChEBI" id="CHEBI:33019"/>
        <dbReference type="ChEBI" id="CHEBI:57538"/>
        <dbReference type="ChEBI" id="CHEBI:58017"/>
        <dbReference type="EC" id="2.4.2.10"/>
    </reaction>
</comment>
<comment type="cofactor">
    <cofactor evidence="1">
        <name>Mg(2+)</name>
        <dbReference type="ChEBI" id="CHEBI:18420"/>
    </cofactor>
</comment>
<comment type="pathway">
    <text evidence="1">Pyrimidine metabolism; UMP biosynthesis via de novo pathway; UMP from orotate: step 1/2.</text>
</comment>
<comment type="subunit">
    <text evidence="1">Homodimer.</text>
</comment>
<comment type="similarity">
    <text evidence="1">Belongs to the purine/pyrimidine phosphoribosyltransferase family. PyrE subfamily.</text>
</comment>
<accession>P61498</accession>
<accession>O08047</accession>
<accession>O08276</accession>
<accession>Q60016</accession>
<name>PYRE_THET2</name>
<gene>
    <name evidence="1" type="primary">pyrE</name>
    <name type="ordered locus">TT_C1380</name>
</gene>
<evidence type="ECO:0000255" key="1">
    <source>
        <dbReference type="HAMAP-Rule" id="MF_01208"/>
    </source>
</evidence>
<evidence type="ECO:0000269" key="2">
    <source>
    </source>
</evidence>
<organism>
    <name type="scientific">Thermus thermophilus (strain ATCC BAA-163 / DSM 7039 / HB27)</name>
    <dbReference type="NCBI Taxonomy" id="262724"/>
    <lineage>
        <taxon>Bacteria</taxon>
        <taxon>Thermotogati</taxon>
        <taxon>Deinococcota</taxon>
        <taxon>Deinococci</taxon>
        <taxon>Thermales</taxon>
        <taxon>Thermaceae</taxon>
        <taxon>Thermus</taxon>
    </lineage>
</organism>